<protein>
    <recommendedName>
        <fullName evidence="1">dTTP/UTP pyrophosphatase</fullName>
        <shortName evidence="1">dTTPase/UTPase</shortName>
        <ecNumber evidence="1">3.6.1.9</ecNumber>
    </recommendedName>
    <alternativeName>
        <fullName evidence="1">Nucleoside triphosphate pyrophosphatase</fullName>
    </alternativeName>
    <alternativeName>
        <fullName evidence="1">Nucleotide pyrophosphatase</fullName>
        <shortName evidence="1">Nucleotide PPase</shortName>
    </alternativeName>
</protein>
<dbReference type="EC" id="3.6.1.9" evidence="1"/>
<dbReference type="EMBL" id="CP000612">
    <property type="protein sequence ID" value="ABO51060.1"/>
    <property type="molecule type" value="Genomic_DNA"/>
</dbReference>
<dbReference type="RefSeq" id="WP_011878858.1">
    <property type="nucleotide sequence ID" value="NC_009253.1"/>
</dbReference>
<dbReference type="SMR" id="A4J7K7"/>
<dbReference type="STRING" id="349161.Dred_2550"/>
<dbReference type="KEGG" id="drm:Dred_2550"/>
<dbReference type="eggNOG" id="COG0424">
    <property type="taxonomic scope" value="Bacteria"/>
</dbReference>
<dbReference type="HOGENOM" id="CLU_040416_0_0_9"/>
<dbReference type="OrthoDB" id="9807767at2"/>
<dbReference type="Proteomes" id="UP000001556">
    <property type="component" value="Chromosome"/>
</dbReference>
<dbReference type="GO" id="GO:0005737">
    <property type="term" value="C:cytoplasm"/>
    <property type="evidence" value="ECO:0007669"/>
    <property type="project" value="UniProtKB-SubCell"/>
</dbReference>
<dbReference type="GO" id="GO:0036218">
    <property type="term" value="F:dTTP diphosphatase activity"/>
    <property type="evidence" value="ECO:0007669"/>
    <property type="project" value="RHEA"/>
</dbReference>
<dbReference type="GO" id="GO:0036221">
    <property type="term" value="F:UTP diphosphatase activity"/>
    <property type="evidence" value="ECO:0007669"/>
    <property type="project" value="RHEA"/>
</dbReference>
<dbReference type="GO" id="GO:0009117">
    <property type="term" value="P:nucleotide metabolic process"/>
    <property type="evidence" value="ECO:0007669"/>
    <property type="project" value="UniProtKB-KW"/>
</dbReference>
<dbReference type="CDD" id="cd00555">
    <property type="entry name" value="Maf"/>
    <property type="match status" value="1"/>
</dbReference>
<dbReference type="FunFam" id="3.90.950.10:FF:000005">
    <property type="entry name" value="7-methyl-GTP pyrophosphatase"/>
    <property type="match status" value="1"/>
</dbReference>
<dbReference type="Gene3D" id="3.90.950.10">
    <property type="match status" value="1"/>
</dbReference>
<dbReference type="HAMAP" id="MF_00528">
    <property type="entry name" value="Maf"/>
    <property type="match status" value="1"/>
</dbReference>
<dbReference type="InterPro" id="IPR029001">
    <property type="entry name" value="ITPase-like_fam"/>
</dbReference>
<dbReference type="InterPro" id="IPR003697">
    <property type="entry name" value="Maf-like"/>
</dbReference>
<dbReference type="NCBIfam" id="TIGR00172">
    <property type="entry name" value="maf"/>
    <property type="match status" value="1"/>
</dbReference>
<dbReference type="PANTHER" id="PTHR43213">
    <property type="entry name" value="BIFUNCTIONAL DTTP/UTP PYROPHOSPHATASE/METHYLTRANSFERASE PROTEIN-RELATED"/>
    <property type="match status" value="1"/>
</dbReference>
<dbReference type="PANTHER" id="PTHR43213:SF5">
    <property type="entry name" value="BIFUNCTIONAL DTTP_UTP PYROPHOSPHATASE_METHYLTRANSFERASE PROTEIN-RELATED"/>
    <property type="match status" value="1"/>
</dbReference>
<dbReference type="Pfam" id="PF02545">
    <property type="entry name" value="Maf"/>
    <property type="match status" value="1"/>
</dbReference>
<dbReference type="PIRSF" id="PIRSF006305">
    <property type="entry name" value="Maf"/>
    <property type="match status" value="1"/>
</dbReference>
<dbReference type="SUPFAM" id="SSF52972">
    <property type="entry name" value="ITPase-like"/>
    <property type="match status" value="1"/>
</dbReference>
<feature type="chain" id="PRO_1000081716" description="dTTP/UTP pyrophosphatase">
    <location>
        <begin position="1"/>
        <end position="191"/>
    </location>
</feature>
<feature type="active site" description="Proton acceptor" evidence="1">
    <location>
        <position position="69"/>
    </location>
</feature>
<feature type="site" description="Important for substrate specificity" evidence="1">
    <location>
        <position position="12"/>
    </location>
</feature>
<feature type="site" description="Important for substrate specificity" evidence="1">
    <location>
        <position position="70"/>
    </location>
</feature>
<feature type="site" description="Important for substrate specificity" evidence="1">
    <location>
        <position position="154"/>
    </location>
</feature>
<evidence type="ECO:0000255" key="1">
    <source>
        <dbReference type="HAMAP-Rule" id="MF_00528"/>
    </source>
</evidence>
<organism>
    <name type="scientific">Desulforamulus reducens (strain ATCC BAA-1160 / DSM 100696 / MI-1)</name>
    <name type="common">Desulfotomaculum reducens</name>
    <dbReference type="NCBI Taxonomy" id="349161"/>
    <lineage>
        <taxon>Bacteria</taxon>
        <taxon>Bacillati</taxon>
        <taxon>Bacillota</taxon>
        <taxon>Clostridia</taxon>
        <taxon>Eubacteriales</taxon>
        <taxon>Peptococcaceae</taxon>
        <taxon>Desulforamulus</taxon>
    </lineage>
</organism>
<keyword id="KW-0963">Cytoplasm</keyword>
<keyword id="KW-0378">Hydrolase</keyword>
<keyword id="KW-0546">Nucleotide metabolism</keyword>
<keyword id="KW-1185">Reference proteome</keyword>
<reference key="1">
    <citation type="submission" date="2007-03" db="EMBL/GenBank/DDBJ databases">
        <title>Complete sequence of Desulfotomaculum reducens MI-1.</title>
        <authorList>
            <consortium name="US DOE Joint Genome Institute"/>
            <person name="Copeland A."/>
            <person name="Lucas S."/>
            <person name="Lapidus A."/>
            <person name="Barry K."/>
            <person name="Detter J.C."/>
            <person name="Glavina del Rio T."/>
            <person name="Hammon N."/>
            <person name="Israni S."/>
            <person name="Dalin E."/>
            <person name="Tice H."/>
            <person name="Pitluck S."/>
            <person name="Sims D."/>
            <person name="Brettin T."/>
            <person name="Bruce D."/>
            <person name="Han C."/>
            <person name="Tapia R."/>
            <person name="Schmutz J."/>
            <person name="Larimer F."/>
            <person name="Land M."/>
            <person name="Hauser L."/>
            <person name="Kyrpides N."/>
            <person name="Kim E."/>
            <person name="Tebo B.M."/>
            <person name="Richardson P."/>
        </authorList>
    </citation>
    <scope>NUCLEOTIDE SEQUENCE [LARGE SCALE GENOMIC DNA]</scope>
    <source>
        <strain>ATCC BAA-1160 / DSM 100696 / MI-1</strain>
    </source>
</reference>
<accession>A4J7K7</accession>
<name>NTPPA_DESRM</name>
<comment type="function">
    <text evidence="1">Nucleoside triphosphate pyrophosphatase that hydrolyzes dTTP and UTP. May have a dual role in cell division arrest and in preventing the incorporation of modified nucleotides into cellular nucleic acids.</text>
</comment>
<comment type="catalytic activity">
    <reaction evidence="1">
        <text>dTTP + H2O = dTMP + diphosphate + H(+)</text>
        <dbReference type="Rhea" id="RHEA:28534"/>
        <dbReference type="ChEBI" id="CHEBI:15377"/>
        <dbReference type="ChEBI" id="CHEBI:15378"/>
        <dbReference type="ChEBI" id="CHEBI:33019"/>
        <dbReference type="ChEBI" id="CHEBI:37568"/>
        <dbReference type="ChEBI" id="CHEBI:63528"/>
        <dbReference type="EC" id="3.6.1.9"/>
    </reaction>
</comment>
<comment type="catalytic activity">
    <reaction evidence="1">
        <text>UTP + H2O = UMP + diphosphate + H(+)</text>
        <dbReference type="Rhea" id="RHEA:29395"/>
        <dbReference type="ChEBI" id="CHEBI:15377"/>
        <dbReference type="ChEBI" id="CHEBI:15378"/>
        <dbReference type="ChEBI" id="CHEBI:33019"/>
        <dbReference type="ChEBI" id="CHEBI:46398"/>
        <dbReference type="ChEBI" id="CHEBI:57865"/>
        <dbReference type="EC" id="3.6.1.9"/>
    </reaction>
</comment>
<comment type="cofactor">
    <cofactor evidence="1">
        <name>a divalent metal cation</name>
        <dbReference type="ChEBI" id="CHEBI:60240"/>
    </cofactor>
</comment>
<comment type="subcellular location">
    <subcellularLocation>
        <location evidence="1">Cytoplasm</location>
    </subcellularLocation>
</comment>
<comment type="similarity">
    <text evidence="1">Belongs to the Maf family. YhdE subfamily.</text>
</comment>
<sequence length="191" mass="20695">MRPIILASASPRRQELLKNLGLEFEVQVSDVDENLEENISSGQLVEKLAERKAAAVALIRTQGLVIGADTIVVLGDKPLGKPTNREEAVQMLSNLQGKSHEVFTGLAVIDASTGQRVVTHQVTEVNFKTLTKDQIERYVDTGEPMDKAGGYAVQGLASIFIDSIRGCYFSVVGLPISKLADALRMFGVEIV</sequence>
<proteinExistence type="inferred from homology"/>
<gene>
    <name type="ordered locus">Dred_2550</name>
</gene>